<reference key="1">
    <citation type="journal article" date="2014" name="Stand. Genomic Sci.">
        <title>Complete genome sequence of Anabaena variabilis ATCC 29413.</title>
        <authorList>
            <person name="Thiel T."/>
            <person name="Pratte B.S."/>
            <person name="Zhong J."/>
            <person name="Goodwin L."/>
            <person name="Copeland A."/>
            <person name="Lucas S."/>
            <person name="Han C."/>
            <person name="Pitluck S."/>
            <person name="Land M.L."/>
            <person name="Kyrpides N.C."/>
            <person name="Woyke T."/>
        </authorList>
    </citation>
    <scope>NUCLEOTIDE SEQUENCE [LARGE SCALE GENOMIC DNA]</scope>
    <source>
        <strain>ATCC 29413 / PCC 7937</strain>
    </source>
</reference>
<proteinExistence type="inferred from homology"/>
<sequence length="351" mass="39167">MTIAVGRAPSRGWFDVLDDWLKRDRFVFVGWSGILLFPCAFLALGGWLTGTTFVTSWYTHGLASSYLEGANFLTVAVSSPADSMGHSLLLLWGPEAQGDFTRWCQLGGLWPFVALHGAFGLIGFMLRQFEIARLVGIRPYNALAFSAPIAVFVSVFLMYPLGQSSWFFAPSFGVAAIFRFLLFLQGFHNWTLNPFHMMGVAGVLGGALLCAIHGATVENTLFEDGEGANTFRAFNPTQSEETYSMVTANRFWSQIFGIAFSNKRWLHFFMLFVPVTGLWMSAVGIVGLALNLRAYDFVSQELRAAEDPEFETFYTKNILLNEGIRAWMAPQDQPHEKFVFPEEVLPRGNAL</sequence>
<evidence type="ECO:0000255" key="1">
    <source>
        <dbReference type="HAMAP-Rule" id="MF_01383"/>
    </source>
</evidence>
<protein>
    <recommendedName>
        <fullName evidence="1">Photosystem II D2 protein</fullName>
        <shortName evidence="1">PSII D2 protein</shortName>
        <ecNumber evidence="1">1.10.3.9</ecNumber>
    </recommendedName>
    <alternativeName>
        <fullName evidence="1">Photosystem Q(A) protein</fullName>
    </alternativeName>
</protein>
<name>PSBD_TRIV2</name>
<keyword id="KW-0148">Chlorophyll</keyword>
<keyword id="KW-0157">Chromophore</keyword>
<keyword id="KW-0249">Electron transport</keyword>
<keyword id="KW-0408">Iron</keyword>
<keyword id="KW-0460">Magnesium</keyword>
<keyword id="KW-0472">Membrane</keyword>
<keyword id="KW-0479">Metal-binding</keyword>
<keyword id="KW-0560">Oxidoreductase</keyword>
<keyword id="KW-0602">Photosynthesis</keyword>
<keyword id="KW-0604">Photosystem II</keyword>
<keyword id="KW-0793">Thylakoid</keyword>
<keyword id="KW-0812">Transmembrane</keyword>
<keyword id="KW-1133">Transmembrane helix</keyword>
<keyword id="KW-0813">Transport</keyword>
<accession>Q3MA59</accession>
<gene>
    <name evidence="1" type="primary">psbD1</name>
    <name type="ordered locus">Ava_1242</name>
</gene>
<gene>
    <name evidence="1" type="primary">psbD2</name>
    <name type="ordered locus">Ava_2512</name>
</gene>
<organism>
    <name type="scientific">Trichormus variabilis (strain ATCC 29413 / PCC 7937)</name>
    <name type="common">Anabaena variabilis</name>
    <dbReference type="NCBI Taxonomy" id="240292"/>
    <lineage>
        <taxon>Bacteria</taxon>
        <taxon>Bacillati</taxon>
        <taxon>Cyanobacteriota</taxon>
        <taxon>Cyanophyceae</taxon>
        <taxon>Nostocales</taxon>
        <taxon>Nostocaceae</taxon>
        <taxon>Trichormus</taxon>
    </lineage>
</organism>
<dbReference type="EC" id="1.10.3.9" evidence="1"/>
<dbReference type="EMBL" id="CP000117">
    <property type="protein sequence ID" value="ABA20866.1"/>
    <property type="molecule type" value="Genomic_DNA"/>
</dbReference>
<dbReference type="EMBL" id="CP000117">
    <property type="protein sequence ID" value="ABA22127.1"/>
    <property type="molecule type" value="Genomic_DNA"/>
</dbReference>
<dbReference type="SMR" id="Q3MA59"/>
<dbReference type="STRING" id="240292.Ava_1242"/>
<dbReference type="KEGG" id="ava:Ava_1242"/>
<dbReference type="KEGG" id="ava:Ava_2512"/>
<dbReference type="eggNOG" id="ENOG502Z8JK">
    <property type="taxonomic scope" value="Bacteria"/>
</dbReference>
<dbReference type="HOGENOM" id="CLU_077965_0_0_3"/>
<dbReference type="Proteomes" id="UP000002533">
    <property type="component" value="Chromosome"/>
</dbReference>
<dbReference type="GO" id="GO:0009523">
    <property type="term" value="C:photosystem II"/>
    <property type="evidence" value="ECO:0007669"/>
    <property type="project" value="UniProtKB-KW"/>
</dbReference>
<dbReference type="GO" id="GO:0031676">
    <property type="term" value="C:plasma membrane-derived thylakoid membrane"/>
    <property type="evidence" value="ECO:0007669"/>
    <property type="project" value="UniProtKB-SubCell"/>
</dbReference>
<dbReference type="GO" id="GO:0016168">
    <property type="term" value="F:chlorophyll binding"/>
    <property type="evidence" value="ECO:0007669"/>
    <property type="project" value="UniProtKB-UniRule"/>
</dbReference>
<dbReference type="GO" id="GO:0045156">
    <property type="term" value="F:electron transporter, transferring electrons within the cyclic electron transport pathway of photosynthesis activity"/>
    <property type="evidence" value="ECO:0007669"/>
    <property type="project" value="InterPro"/>
</dbReference>
<dbReference type="GO" id="GO:0005506">
    <property type="term" value="F:iron ion binding"/>
    <property type="evidence" value="ECO:0007669"/>
    <property type="project" value="UniProtKB-UniRule"/>
</dbReference>
<dbReference type="GO" id="GO:0010242">
    <property type="term" value="F:oxygen evolving activity"/>
    <property type="evidence" value="ECO:0007669"/>
    <property type="project" value="UniProtKB-EC"/>
</dbReference>
<dbReference type="GO" id="GO:0009772">
    <property type="term" value="P:photosynthetic electron transport in photosystem II"/>
    <property type="evidence" value="ECO:0007669"/>
    <property type="project" value="InterPro"/>
</dbReference>
<dbReference type="CDD" id="cd09288">
    <property type="entry name" value="Photosystem-II_D2"/>
    <property type="match status" value="1"/>
</dbReference>
<dbReference type="FunFam" id="1.20.85.10:FF:000001">
    <property type="entry name" value="photosystem II D2 protein-like"/>
    <property type="match status" value="1"/>
</dbReference>
<dbReference type="Gene3D" id="1.20.85.10">
    <property type="entry name" value="Photosystem II protein D1-like"/>
    <property type="match status" value="1"/>
</dbReference>
<dbReference type="HAMAP" id="MF_01383">
    <property type="entry name" value="PSII_PsbD_D2"/>
    <property type="match status" value="1"/>
</dbReference>
<dbReference type="InterPro" id="IPR055266">
    <property type="entry name" value="D1/D2"/>
</dbReference>
<dbReference type="InterPro" id="IPR036854">
    <property type="entry name" value="Photo_II_D1/D2_sf"/>
</dbReference>
<dbReference type="InterPro" id="IPR000484">
    <property type="entry name" value="Photo_RC_L/M"/>
</dbReference>
<dbReference type="InterPro" id="IPR055265">
    <property type="entry name" value="Photo_RC_L/M_CS"/>
</dbReference>
<dbReference type="InterPro" id="IPR005868">
    <property type="entry name" value="PSII_PsbD/D2"/>
</dbReference>
<dbReference type="NCBIfam" id="TIGR01152">
    <property type="entry name" value="psbD"/>
    <property type="match status" value="1"/>
</dbReference>
<dbReference type="PANTHER" id="PTHR33149:SF12">
    <property type="entry name" value="PHOTOSYSTEM II D2 PROTEIN"/>
    <property type="match status" value="1"/>
</dbReference>
<dbReference type="PANTHER" id="PTHR33149">
    <property type="entry name" value="PHOTOSYSTEM II PROTEIN D1"/>
    <property type="match status" value="1"/>
</dbReference>
<dbReference type="Pfam" id="PF00124">
    <property type="entry name" value="Photo_RC"/>
    <property type="match status" value="1"/>
</dbReference>
<dbReference type="PRINTS" id="PR00256">
    <property type="entry name" value="REACTNCENTRE"/>
</dbReference>
<dbReference type="SUPFAM" id="SSF81483">
    <property type="entry name" value="Bacterial photosystem II reaction centre, L and M subunits"/>
    <property type="match status" value="1"/>
</dbReference>
<dbReference type="PROSITE" id="PS00244">
    <property type="entry name" value="REACTION_CENTER"/>
    <property type="match status" value="1"/>
</dbReference>
<feature type="chain" id="PRO_0000359600" description="Photosystem II D2 protein">
    <location>
        <begin position="1"/>
        <end position="351"/>
    </location>
</feature>
<feature type="transmembrane region" description="Helical" evidence="1">
    <location>
        <begin position="39"/>
        <end position="59"/>
    </location>
</feature>
<feature type="transmembrane region" description="Helical" evidence="1">
    <location>
        <begin position="123"/>
        <end position="139"/>
    </location>
</feature>
<feature type="transmembrane region" description="Helical" evidence="1">
    <location>
        <begin position="151"/>
        <end position="164"/>
    </location>
</feature>
<feature type="transmembrane region" description="Helical" evidence="1">
    <location>
        <begin position="206"/>
        <end position="226"/>
    </location>
</feature>
<feature type="transmembrane region" description="Helical" evidence="1">
    <location>
        <begin position="277"/>
        <end position="293"/>
    </location>
</feature>
<feature type="binding site" description="axial binding residue" evidence="1">
    <location>
        <position position="116"/>
    </location>
    <ligand>
        <name>chlorophyll a</name>
        <dbReference type="ChEBI" id="CHEBI:58416"/>
        <label>ChlzD2</label>
    </ligand>
    <ligandPart>
        <name>Mg</name>
        <dbReference type="ChEBI" id="CHEBI:25107"/>
    </ligandPart>
</feature>
<feature type="binding site" evidence="1">
    <location>
        <position position="128"/>
    </location>
    <ligand>
        <name>pheophytin a</name>
        <dbReference type="ChEBI" id="CHEBI:136840"/>
        <label>D2</label>
    </ligand>
</feature>
<feature type="binding site" evidence="1">
    <location>
        <position position="141"/>
    </location>
    <ligand>
        <name>pheophytin a</name>
        <dbReference type="ChEBI" id="CHEBI:136840"/>
        <label>D2</label>
    </ligand>
</feature>
<feature type="binding site" description="axial binding residue" evidence="1">
    <location>
        <position position="196"/>
    </location>
    <ligand>
        <name>chlorophyll a</name>
        <dbReference type="ChEBI" id="CHEBI:58416"/>
        <label>PD2</label>
    </ligand>
    <ligandPart>
        <name>Mg</name>
        <dbReference type="ChEBI" id="CHEBI:25107"/>
    </ligandPart>
</feature>
<feature type="binding site" evidence="1">
    <location>
        <position position="213"/>
    </location>
    <ligand>
        <name>a plastoquinone</name>
        <dbReference type="ChEBI" id="CHEBI:17757"/>
        <label>Q(A)</label>
    </ligand>
</feature>
<feature type="binding site" evidence="1">
    <location>
        <position position="213"/>
    </location>
    <ligand>
        <name>Fe cation</name>
        <dbReference type="ChEBI" id="CHEBI:24875"/>
        <note>ligand shared with heterodimeric partner</note>
    </ligand>
</feature>
<feature type="binding site" evidence="1">
    <location>
        <position position="260"/>
    </location>
    <ligand>
        <name>a plastoquinone</name>
        <dbReference type="ChEBI" id="CHEBI:17757"/>
        <label>Q(A)</label>
    </ligand>
</feature>
<feature type="binding site" evidence="1">
    <location>
        <position position="267"/>
    </location>
    <ligand>
        <name>Fe cation</name>
        <dbReference type="ChEBI" id="CHEBI:24875"/>
        <note>ligand shared with heterodimeric partner</note>
    </ligand>
</feature>
<comment type="function">
    <text evidence="1">Photosystem II (PSII) is a light-driven water:plastoquinone oxidoreductase that uses light energy to abstract electrons from H(2)O, generating O(2) and a proton gradient subsequently used for ATP formation. It consists of a core antenna complex that captures photons, and an electron transfer chain that converts photonic excitation into a charge separation. The D1/D2 (PsbA/PsbD) reaction center heterodimer binds P680, the primary electron donor of PSII as well as several subsequent electron acceptors. D2 is needed for assembly of a stable PSII complex.</text>
</comment>
<comment type="catalytic activity">
    <reaction evidence="1">
        <text>2 a plastoquinone + 4 hnu + 2 H2O = 2 a plastoquinol + O2</text>
        <dbReference type="Rhea" id="RHEA:36359"/>
        <dbReference type="Rhea" id="RHEA-COMP:9561"/>
        <dbReference type="Rhea" id="RHEA-COMP:9562"/>
        <dbReference type="ChEBI" id="CHEBI:15377"/>
        <dbReference type="ChEBI" id="CHEBI:15379"/>
        <dbReference type="ChEBI" id="CHEBI:17757"/>
        <dbReference type="ChEBI" id="CHEBI:30212"/>
        <dbReference type="ChEBI" id="CHEBI:62192"/>
        <dbReference type="EC" id="1.10.3.9"/>
    </reaction>
</comment>
<comment type="cofactor">
    <text evidence="1">The D1/D2 heterodimer binds P680, chlorophylls that are the primary electron donor of PSII, and subsequent electron acceptors. It shares a non-heme iron and each subunit binds pheophytin, quinone, additional chlorophylls, carotenoids and lipids. There is also a Cl(-1) ion associated with D1 and D2, which is required for oxygen evolution. The PSII complex binds additional chlorophylls, carotenoids and specific lipids.</text>
</comment>
<comment type="subunit">
    <text evidence="1">PSII is composed of 1 copy each of membrane proteins PsbA, PsbB, PsbC, PsbD, PsbE, PsbF, PsbH, PsbI, PsbJ, PsbK, PsbL, PsbM, PsbT, PsbX, PsbY, PsbZ, Psb30/Ycf12, peripheral proteins PsbO, CyanoQ (PsbQ), PsbU, PsbV and a large number of cofactors. It forms dimeric complexes.</text>
</comment>
<comment type="subcellular location">
    <subcellularLocation>
        <location evidence="1">Cellular thylakoid membrane</location>
        <topology evidence="1">Multi-pass membrane protein</topology>
    </subcellularLocation>
</comment>
<comment type="miscellaneous">
    <text evidence="1">2 of the reaction center chlorophylls (ChlD1 and ChlD2) are entirely coordinated by water.</text>
</comment>
<comment type="similarity">
    <text evidence="1">Belongs to the reaction center PufL/M/PsbA/D family.</text>
</comment>